<sequence length="67" mass="7610">MPYHYLFLALFTYLATSNVVSGSTQACLPVGPRKNGMNVNFYKYSLLDSTTYSYPQYMTSGYASNWN</sequence>
<comment type="similarity">
    <text evidence="1">Belongs to the flocculin family.</text>
</comment>
<comment type="caution">
    <text evidence="2">Could be the product of a pseudogene unlikely to encode a functional protein. The ORF corresponds to a fragmentary flocculin piece with sequence similarity to FLO1. Because of that it is not part of the S.cerevisiae S288c complete/reference proteome set.</text>
</comment>
<reference key="1">
    <citation type="submission" date="1994-02" db="EMBL/GenBank/DDBJ databases">
        <title>Sequencing of chromosome I of Saccharomyces cerevisiae: analysis of the 52 Kbp CDC15-FLO1-PHO11-YAR074 region.</title>
        <authorList>
            <person name="Bussey H."/>
            <person name="Keng T."/>
            <person name="Storms R.K."/>
            <person name="Vo D."/>
            <person name="Zhong W."/>
            <person name="Fortin N."/>
            <person name="Barton A.B."/>
            <person name="Kaback D.B."/>
            <person name="Clark M.W."/>
        </authorList>
    </citation>
    <scope>NUCLEOTIDE SEQUENCE [GENOMIC DNA]</scope>
    <source>
        <strain>ATCC 204511 / S288c / AB972</strain>
    </source>
</reference>
<reference key="2">
    <citation type="journal article" date="1995" name="Proc. Natl. Acad. Sci. U.S.A.">
        <title>The nucleotide sequence of chromosome I from Saccharomyces cerevisiae.</title>
        <authorList>
            <person name="Bussey H."/>
            <person name="Kaback D.B."/>
            <person name="Zhong W.-W."/>
            <person name="Vo D.H."/>
            <person name="Clark M.W."/>
            <person name="Fortin N."/>
            <person name="Hall J."/>
            <person name="Ouellette B.F.F."/>
            <person name="Keng T."/>
            <person name="Barton A.B."/>
            <person name="Su Y."/>
            <person name="Davies C.J."/>
            <person name="Storms R.K."/>
        </authorList>
    </citation>
    <scope>NUCLEOTIDE SEQUENCE [LARGE SCALE GENOMIC DNA]</scope>
    <source>
        <strain>ATCC 204508 / S288c</strain>
    </source>
</reference>
<reference key="3">
    <citation type="journal article" date="2014" name="G3 (Bethesda)">
        <title>The reference genome sequence of Saccharomyces cerevisiae: Then and now.</title>
        <authorList>
            <person name="Engel S.R."/>
            <person name="Dietrich F.S."/>
            <person name="Fisk D.G."/>
            <person name="Binkley G."/>
            <person name="Balakrishnan R."/>
            <person name="Costanzo M.C."/>
            <person name="Dwight S.S."/>
            <person name="Hitz B.C."/>
            <person name="Karra K."/>
            <person name="Nash R.S."/>
            <person name="Weng S."/>
            <person name="Wong E.D."/>
            <person name="Lloyd P."/>
            <person name="Skrzypek M.S."/>
            <person name="Miyasato S.R."/>
            <person name="Simison M."/>
            <person name="Cherry J.M."/>
        </authorList>
    </citation>
    <scope>GENOME REANNOTATION</scope>
    <source>
        <strain>ATCC 204508 / S288c</strain>
    </source>
</reference>
<reference key="4">
    <citation type="journal article" date="2007" name="Genome Res.">
        <title>Approaching a complete repository of sequence-verified protein-encoding clones for Saccharomyces cerevisiae.</title>
        <authorList>
            <person name="Hu Y."/>
            <person name="Rolfs A."/>
            <person name="Bhullar B."/>
            <person name="Murthy T.V.S."/>
            <person name="Zhu C."/>
            <person name="Berger M.F."/>
            <person name="Camargo A.A."/>
            <person name="Kelley F."/>
            <person name="McCarron S."/>
            <person name="Jepson D."/>
            <person name="Richardson A."/>
            <person name="Raphael J."/>
            <person name="Moreira D."/>
            <person name="Taycher E."/>
            <person name="Zuo D."/>
            <person name="Mohr S."/>
            <person name="Kane M.F."/>
            <person name="Williamson J."/>
            <person name="Simpson A.J.G."/>
            <person name="Bulyk M.L."/>
            <person name="Harlow E."/>
            <person name="Marsischky G."/>
            <person name="Kolodner R.D."/>
            <person name="LaBaer J."/>
        </authorList>
    </citation>
    <scope>NUCLEOTIDE SEQUENCE [GENOMIC DNA]</scope>
    <source>
        <strain>ATCC 204508 / S288c</strain>
    </source>
</reference>
<accession>P0CX90</accession>
<accession>D3DLG1</accession>
<accession>P39561</accession>
<accession>Q547K8</accession>
<proteinExistence type="uncertain"/>
<feature type="chain" id="PRO_0000202431" description="Uncharacterized protein YAR061W">
    <location>
        <begin position="1"/>
        <end position="67"/>
    </location>
</feature>
<dbReference type="EMBL" id="L28920">
    <property type="protein sequence ID" value="AAC09502.1"/>
    <property type="molecule type" value="Genomic_DNA"/>
</dbReference>
<dbReference type="EMBL" id="AY557703">
    <property type="protein sequence ID" value="AAS56029.1"/>
    <property type="molecule type" value="Genomic_DNA"/>
</dbReference>
<dbReference type="PIR" id="S53470">
    <property type="entry name" value="S53470"/>
</dbReference>
<dbReference type="RefSeq" id="NP_878091.3">
    <property type="nucleotide sequence ID" value="NM_001184598.3"/>
</dbReference>
<dbReference type="BioGRID" id="37073">
    <property type="interactions" value="56"/>
</dbReference>
<dbReference type="STRING" id="4932.YHR212W-A"/>
<dbReference type="PaxDb" id="4932-YHR212W-A"/>
<dbReference type="EnsemblFungi" id="YHR212W-A_mRNA">
    <property type="protein sequence ID" value="YHR212W-A"/>
    <property type="gene ID" value="YHR212W-A"/>
</dbReference>
<dbReference type="KEGG" id="sce:YHR212W-A"/>
<dbReference type="AGR" id="SGD:S000000087"/>
<dbReference type="SGD" id="S000000087">
    <property type="gene designation" value="YAR061W"/>
</dbReference>
<dbReference type="VEuPathDB" id="FungiDB:YHR212W-A"/>
<dbReference type="HOGENOM" id="CLU_2813859_0_0_1"/>
<dbReference type="OrthoDB" id="4070698at2759"/>
<dbReference type="Gene3D" id="2.60.120.1560">
    <property type="match status" value="1"/>
</dbReference>
<gene>
    <name type="ordered locus">YAR061W</name>
</gene>
<name>YAN1_YEAST</name>
<evidence type="ECO:0000305" key="1"/>
<evidence type="ECO:0000305" key="2">
    <source>
    </source>
</evidence>
<protein>
    <recommendedName>
        <fullName>Uncharacterized protein YAR061W</fullName>
    </recommendedName>
</protein>
<organism>
    <name type="scientific">Saccharomyces cerevisiae (strain ATCC 204508 / S288c)</name>
    <name type="common">Baker's yeast</name>
    <dbReference type="NCBI Taxonomy" id="559292"/>
    <lineage>
        <taxon>Eukaryota</taxon>
        <taxon>Fungi</taxon>
        <taxon>Dikarya</taxon>
        <taxon>Ascomycota</taxon>
        <taxon>Saccharomycotina</taxon>
        <taxon>Saccharomycetes</taxon>
        <taxon>Saccharomycetales</taxon>
        <taxon>Saccharomycetaceae</taxon>
        <taxon>Saccharomyces</taxon>
    </lineage>
</organism>